<feature type="chain" id="PRO_0000148100" description="ATP-dependent protease subunit HslV">
    <location>
        <begin position="1"/>
        <end position="188"/>
    </location>
</feature>
<feature type="active site" evidence="1">
    <location>
        <position position="14"/>
    </location>
</feature>
<feature type="binding site" evidence="1">
    <location>
        <position position="173"/>
    </location>
    <ligand>
        <name>Na(+)</name>
        <dbReference type="ChEBI" id="CHEBI:29101"/>
    </ligand>
</feature>
<feature type="binding site" evidence="1">
    <location>
        <position position="176"/>
    </location>
    <ligand>
        <name>Na(+)</name>
        <dbReference type="ChEBI" id="CHEBI:29101"/>
    </ligand>
</feature>
<feature type="binding site" evidence="1">
    <location>
        <position position="179"/>
    </location>
    <ligand>
        <name>Na(+)</name>
        <dbReference type="ChEBI" id="CHEBI:29101"/>
    </ligand>
</feature>
<evidence type="ECO:0000255" key="1">
    <source>
        <dbReference type="HAMAP-Rule" id="MF_00248"/>
    </source>
</evidence>
<organism>
    <name type="scientific">Caulobacter vibrioides (strain ATCC 19089 / CIP 103742 / CB 15)</name>
    <name type="common">Caulobacter crescentus</name>
    <dbReference type="NCBI Taxonomy" id="190650"/>
    <lineage>
        <taxon>Bacteria</taxon>
        <taxon>Pseudomonadati</taxon>
        <taxon>Pseudomonadota</taxon>
        <taxon>Alphaproteobacteria</taxon>
        <taxon>Caulobacterales</taxon>
        <taxon>Caulobacteraceae</taxon>
        <taxon>Caulobacter</taxon>
    </lineage>
</organism>
<accession>Q9A239</accession>
<proteinExistence type="inferred from homology"/>
<name>HSLV_CAUVC</name>
<sequence>MQSNSSSFPDWHGTTILAVRKNGSTVIAGDGQVSMGPTVVKGNARKVRRLAGGKVVAGFAGATADAFTLIERLEAKLEQYPDQLARACVDLAKDWRTDRYLRRLEAMLLVADKTAIYTVTGVGDVLEPGESLGGGAVAAIGSGGNYALAAGKALIDLDLSAEDIARKAMGIAAEICVYTNGNLTVESL</sequence>
<dbReference type="EC" id="3.4.25.2" evidence="1"/>
<dbReference type="EMBL" id="AE005673">
    <property type="protein sequence ID" value="AAK25689.1"/>
    <property type="molecule type" value="Genomic_DNA"/>
</dbReference>
<dbReference type="PIR" id="E87711">
    <property type="entry name" value="E87711"/>
</dbReference>
<dbReference type="RefSeq" id="NP_422521.1">
    <property type="nucleotide sequence ID" value="NC_002696.2"/>
</dbReference>
<dbReference type="SMR" id="Q9A239"/>
<dbReference type="STRING" id="190650.CC_3727"/>
<dbReference type="MEROPS" id="T01.006"/>
<dbReference type="EnsemblBacteria" id="AAK25689">
    <property type="protein sequence ID" value="AAK25689"/>
    <property type="gene ID" value="CC_3727"/>
</dbReference>
<dbReference type="KEGG" id="ccr:CC_3727"/>
<dbReference type="PATRIC" id="fig|190650.5.peg.3729"/>
<dbReference type="eggNOG" id="COG5405">
    <property type="taxonomic scope" value="Bacteria"/>
</dbReference>
<dbReference type="HOGENOM" id="CLU_093872_1_0_5"/>
<dbReference type="BioCyc" id="CAULO:CC3727-MONOMER"/>
<dbReference type="Proteomes" id="UP000001816">
    <property type="component" value="Chromosome"/>
</dbReference>
<dbReference type="GO" id="GO:0009376">
    <property type="term" value="C:HslUV protease complex"/>
    <property type="evidence" value="ECO:0007669"/>
    <property type="project" value="UniProtKB-UniRule"/>
</dbReference>
<dbReference type="GO" id="GO:0005839">
    <property type="term" value="C:proteasome core complex"/>
    <property type="evidence" value="ECO:0007669"/>
    <property type="project" value="InterPro"/>
</dbReference>
<dbReference type="GO" id="GO:0046872">
    <property type="term" value="F:metal ion binding"/>
    <property type="evidence" value="ECO:0007669"/>
    <property type="project" value="UniProtKB-KW"/>
</dbReference>
<dbReference type="GO" id="GO:0004298">
    <property type="term" value="F:threonine-type endopeptidase activity"/>
    <property type="evidence" value="ECO:0007669"/>
    <property type="project" value="UniProtKB-KW"/>
</dbReference>
<dbReference type="GO" id="GO:0051603">
    <property type="term" value="P:proteolysis involved in protein catabolic process"/>
    <property type="evidence" value="ECO:0007669"/>
    <property type="project" value="InterPro"/>
</dbReference>
<dbReference type="CDD" id="cd01913">
    <property type="entry name" value="protease_HslV"/>
    <property type="match status" value="1"/>
</dbReference>
<dbReference type="Gene3D" id="3.60.20.10">
    <property type="entry name" value="Glutamine Phosphoribosylpyrophosphate, subunit 1, domain 1"/>
    <property type="match status" value="1"/>
</dbReference>
<dbReference type="HAMAP" id="MF_00248">
    <property type="entry name" value="HslV"/>
    <property type="match status" value="1"/>
</dbReference>
<dbReference type="InterPro" id="IPR022281">
    <property type="entry name" value="ATP-dep_Prtase_HsIV_su"/>
</dbReference>
<dbReference type="InterPro" id="IPR029055">
    <property type="entry name" value="Ntn_hydrolases_N"/>
</dbReference>
<dbReference type="InterPro" id="IPR001353">
    <property type="entry name" value="Proteasome_sua/b"/>
</dbReference>
<dbReference type="InterPro" id="IPR023333">
    <property type="entry name" value="Proteasome_suB-type"/>
</dbReference>
<dbReference type="NCBIfam" id="TIGR03692">
    <property type="entry name" value="ATP_dep_HslV"/>
    <property type="match status" value="1"/>
</dbReference>
<dbReference type="NCBIfam" id="NF003964">
    <property type="entry name" value="PRK05456.1"/>
    <property type="match status" value="1"/>
</dbReference>
<dbReference type="PANTHER" id="PTHR32194:SF7">
    <property type="entry name" value="ATP-DEPENDENT PROTEASE SUBUNIT HSLV"/>
    <property type="match status" value="1"/>
</dbReference>
<dbReference type="PANTHER" id="PTHR32194">
    <property type="entry name" value="METALLOPROTEASE TLDD"/>
    <property type="match status" value="1"/>
</dbReference>
<dbReference type="Pfam" id="PF00227">
    <property type="entry name" value="Proteasome"/>
    <property type="match status" value="1"/>
</dbReference>
<dbReference type="PIRSF" id="PIRSF039093">
    <property type="entry name" value="HslV"/>
    <property type="match status" value="1"/>
</dbReference>
<dbReference type="SUPFAM" id="SSF56235">
    <property type="entry name" value="N-terminal nucleophile aminohydrolases (Ntn hydrolases)"/>
    <property type="match status" value="1"/>
</dbReference>
<dbReference type="PROSITE" id="PS51476">
    <property type="entry name" value="PROTEASOME_BETA_2"/>
    <property type="match status" value="1"/>
</dbReference>
<comment type="function">
    <text evidence="1">Protease subunit of a proteasome-like degradation complex believed to be a general protein degrading machinery.</text>
</comment>
<comment type="catalytic activity">
    <reaction evidence="1">
        <text>ATP-dependent cleavage of peptide bonds with broad specificity.</text>
        <dbReference type="EC" id="3.4.25.2"/>
    </reaction>
</comment>
<comment type="activity regulation">
    <text evidence="1">Allosterically activated by HslU binding.</text>
</comment>
<comment type="subunit">
    <text evidence="1">A double ring-shaped homohexamer of HslV is capped on each side by a ring-shaped HslU homohexamer. The assembly of the HslU/HslV complex is dependent on binding of ATP.</text>
</comment>
<comment type="subcellular location">
    <subcellularLocation>
        <location evidence="1">Cytoplasm</location>
    </subcellularLocation>
</comment>
<comment type="similarity">
    <text evidence="1">Belongs to the peptidase T1B family. HslV subfamily.</text>
</comment>
<gene>
    <name evidence="1" type="primary">hslV</name>
    <name type="ordered locus">CC_3727</name>
</gene>
<reference key="1">
    <citation type="journal article" date="2001" name="Proc. Natl. Acad. Sci. U.S.A.">
        <title>Complete genome sequence of Caulobacter crescentus.</title>
        <authorList>
            <person name="Nierman W.C."/>
            <person name="Feldblyum T.V."/>
            <person name="Laub M.T."/>
            <person name="Paulsen I.T."/>
            <person name="Nelson K.E."/>
            <person name="Eisen J.A."/>
            <person name="Heidelberg J.F."/>
            <person name="Alley M.R.K."/>
            <person name="Ohta N."/>
            <person name="Maddock J.R."/>
            <person name="Potocka I."/>
            <person name="Nelson W.C."/>
            <person name="Newton A."/>
            <person name="Stephens C."/>
            <person name="Phadke N.D."/>
            <person name="Ely B."/>
            <person name="DeBoy R.T."/>
            <person name="Dodson R.J."/>
            <person name="Durkin A.S."/>
            <person name="Gwinn M.L."/>
            <person name="Haft D.H."/>
            <person name="Kolonay J.F."/>
            <person name="Smit J."/>
            <person name="Craven M.B."/>
            <person name="Khouri H.M."/>
            <person name="Shetty J."/>
            <person name="Berry K.J."/>
            <person name="Utterback T.R."/>
            <person name="Tran K."/>
            <person name="Wolf A.M."/>
            <person name="Vamathevan J.J."/>
            <person name="Ermolaeva M.D."/>
            <person name="White O."/>
            <person name="Salzberg S.L."/>
            <person name="Venter J.C."/>
            <person name="Shapiro L."/>
            <person name="Fraser C.M."/>
        </authorList>
    </citation>
    <scope>NUCLEOTIDE SEQUENCE [LARGE SCALE GENOMIC DNA]</scope>
    <source>
        <strain>ATCC 19089 / CIP 103742 / CB 15</strain>
    </source>
</reference>
<keyword id="KW-0021">Allosteric enzyme</keyword>
<keyword id="KW-0963">Cytoplasm</keyword>
<keyword id="KW-0378">Hydrolase</keyword>
<keyword id="KW-0479">Metal-binding</keyword>
<keyword id="KW-0645">Protease</keyword>
<keyword id="KW-1185">Reference proteome</keyword>
<keyword id="KW-0915">Sodium</keyword>
<keyword id="KW-0888">Threonine protease</keyword>
<protein>
    <recommendedName>
        <fullName evidence="1">ATP-dependent protease subunit HslV</fullName>
        <ecNumber evidence="1">3.4.25.2</ecNumber>
    </recommendedName>
</protein>